<gene>
    <name evidence="4" type="primary">IO</name>
    <name evidence="4" type="synonym">CYP76A26</name>
    <name evidence="5" type="ORF">Caros003676</name>
    <name evidence="4" type="ORF">Caros020058</name>
</gene>
<sequence>MATITFDSLNPVTVAISAGFLLLLIIFVKSRTGSSKRKPPGPPGWPIFGNMFDLGDLPHQTLYKLKSKYGPIVWLQLGSINTMVVQNAVSAAELFKKHDVPFCDRKVPDTLTAFNFNQGSLGMNTYGGHWRVLRRLCSMEFLVNKRMNETTDLRRRIEDNMVRWIEEDSLASKAQGGTGAVQLSRFLFLMAFNLVGNLMLSRDLMDNKDPEGREFFDCMNEILELAGTPNIADFLPLLKKLDPLGMKKRMVDNMSRTMKISSKFVQERLDNRKAGKINEKKDFLDVMLEYQGDGKDGPDKFTEQHVNIVIMEMFFAGSETTSISIEWGFTELLRNPHAFKKVREEIDRVVGVNRMVEETDMENLPYLQAVVKETLRLHPALPMLLPRNTMEDTEYMGYLIPKGTQVFVNAWAIGRDPEYWQDPLSFKPERFINSSVEYKGQHFELIPFGSGRRICVGFPLAHRVVHLTLATLVQAFDWDLGAGVKPQDIDLEERLGLTLRKKNPLNVIPKKRVHI</sequence>
<comment type="function">
    <text evidence="3">Component of the seco-iridoid and derivatives monoterpenoid indole alkaloids (MIAs, e.g. vincristine, quinine, and strychnine) biosynthesis pathway. Catalyzes the conversion of cis-trans-nepetalactol (iridodial) into 7-deoxyloganetic acid. Also converts iridotrial into 7-deoxyloganetic acid.</text>
</comment>
<comment type="catalytic activity">
    <reaction evidence="3">
        <text>(+)-cis-trans-nepetalactol + 3 reduced [NADPH--hemoprotein reductase] + 3 O2 = 7-deoxyloganetate + 3 oxidized [NADPH--hemoprotein reductase] + 4 H2O + 4 H(+)</text>
        <dbReference type="Rhea" id="RHEA:57560"/>
        <dbReference type="Rhea" id="RHEA-COMP:11964"/>
        <dbReference type="Rhea" id="RHEA-COMP:11965"/>
        <dbReference type="ChEBI" id="CHEBI:26"/>
        <dbReference type="ChEBI" id="CHEBI:15377"/>
        <dbReference type="ChEBI" id="CHEBI:15378"/>
        <dbReference type="ChEBI" id="CHEBI:15379"/>
        <dbReference type="ChEBI" id="CHEBI:57618"/>
        <dbReference type="ChEBI" id="CHEBI:58210"/>
        <dbReference type="ChEBI" id="CHEBI:76846"/>
        <dbReference type="EC" id="1.14.14.161"/>
    </reaction>
    <physiologicalReaction direction="left-to-right" evidence="3">
        <dbReference type="Rhea" id="RHEA:57561"/>
    </physiologicalReaction>
</comment>
<comment type="biophysicochemical properties">
    <kinetics>
        <text evidence="3">kcat is 5.2 sec(-1) with cis-trans-nepetalactol as substrate.</text>
    </kinetics>
</comment>
<comment type="pathway">
    <text evidence="3">Alkaloid biosynthesis.</text>
</comment>
<comment type="subcellular location">
    <subcellularLocation>
        <location evidence="3">Endoplasmic reticulum membrane</location>
        <topology evidence="2">Multi-pass membrane protein</topology>
    </subcellularLocation>
</comment>
<comment type="tissue specificity">
    <text evidence="3">Expressed in the leaf internal phloem-associated parenchyma (IPAP) inside the mesophyll.</text>
</comment>
<comment type="induction">
    <text evidence="3">By jasmonic acid (MeJA).</text>
</comment>
<comment type="similarity">
    <text evidence="5">Belongs to the cytochrome P450 family.</text>
</comment>
<comment type="online information" name="ORCAE database">
    <link uri="https://orcae.psb.ugent.be/taxa/catro/regular/v1/"/>
</comment>
<organism>
    <name type="scientific">Catharanthus roseus</name>
    <name type="common">Madagascar periwinkle</name>
    <name type="synonym">Vinca rosea</name>
    <dbReference type="NCBI Taxonomy" id="4058"/>
    <lineage>
        <taxon>Eukaryota</taxon>
        <taxon>Viridiplantae</taxon>
        <taxon>Streptophyta</taxon>
        <taxon>Embryophyta</taxon>
        <taxon>Tracheophyta</taxon>
        <taxon>Spermatophyta</taxon>
        <taxon>Magnoliopsida</taxon>
        <taxon>eudicotyledons</taxon>
        <taxon>Gunneridae</taxon>
        <taxon>Pentapetalae</taxon>
        <taxon>asterids</taxon>
        <taxon>lamiids</taxon>
        <taxon>Gentianales</taxon>
        <taxon>Apocynaceae</taxon>
        <taxon>Rauvolfioideae</taxon>
        <taxon>Vinceae</taxon>
        <taxon>Catharanthinae</taxon>
        <taxon>Catharanthus</taxon>
    </lineage>
</organism>
<feature type="chain" id="PRO_0000446407" description="Iridoid oxidase">
    <location>
        <begin position="1"/>
        <end position="515"/>
    </location>
</feature>
<feature type="transmembrane region" description="Helical" evidence="2">
    <location>
        <begin position="8"/>
        <end position="28"/>
    </location>
</feature>
<feature type="transmembrane region" description="Helical" evidence="2">
    <location>
        <begin position="180"/>
        <end position="200"/>
    </location>
</feature>
<feature type="binding site" description="axial binding residue" evidence="1">
    <location>
        <position position="455"/>
    </location>
    <ligand>
        <name>heme</name>
        <dbReference type="ChEBI" id="CHEBI:30413"/>
    </ligand>
    <ligandPart>
        <name>Fe</name>
        <dbReference type="ChEBI" id="CHEBI:18248"/>
    </ligandPart>
</feature>
<name>IO_CATRO</name>
<proteinExistence type="evidence at protein level"/>
<accession>W8JIS5</accession>
<dbReference type="EC" id="1.14.14.161" evidence="3"/>
<dbReference type="EMBL" id="KF302066">
    <property type="protein sequence ID" value="AHK60833.1"/>
    <property type="molecule type" value="mRNA"/>
</dbReference>
<dbReference type="SMR" id="W8JIS5"/>
<dbReference type="OrthoDB" id="1055148at2759"/>
<dbReference type="BioCyc" id="MetaCyc:MONOMER-20520"/>
<dbReference type="BRENDA" id="1.14.14.161">
    <property type="organism ID" value="1211"/>
</dbReference>
<dbReference type="GO" id="GO:0005783">
    <property type="term" value="C:endoplasmic reticulum"/>
    <property type="evidence" value="ECO:0000314"/>
    <property type="project" value="UniProtKB"/>
</dbReference>
<dbReference type="GO" id="GO:0005789">
    <property type="term" value="C:endoplasmic reticulum membrane"/>
    <property type="evidence" value="ECO:0007669"/>
    <property type="project" value="UniProtKB-SubCell"/>
</dbReference>
<dbReference type="GO" id="GO:0020037">
    <property type="term" value="F:heme binding"/>
    <property type="evidence" value="ECO:0007669"/>
    <property type="project" value="InterPro"/>
</dbReference>
<dbReference type="GO" id="GO:0005506">
    <property type="term" value="F:iron ion binding"/>
    <property type="evidence" value="ECO:0007669"/>
    <property type="project" value="InterPro"/>
</dbReference>
<dbReference type="GO" id="GO:0004497">
    <property type="term" value="F:monooxygenase activity"/>
    <property type="evidence" value="ECO:0007669"/>
    <property type="project" value="UniProtKB-KW"/>
</dbReference>
<dbReference type="GO" id="GO:0016705">
    <property type="term" value="F:oxidoreductase activity, acting on paired donors, with incorporation or reduction of molecular oxygen"/>
    <property type="evidence" value="ECO:0007669"/>
    <property type="project" value="InterPro"/>
</dbReference>
<dbReference type="GO" id="GO:0035834">
    <property type="term" value="P:indole alkaloid metabolic process"/>
    <property type="evidence" value="ECO:0000314"/>
    <property type="project" value="UniProtKB"/>
</dbReference>
<dbReference type="GO" id="GO:0009753">
    <property type="term" value="P:response to jasmonic acid"/>
    <property type="evidence" value="ECO:0000270"/>
    <property type="project" value="UniProtKB"/>
</dbReference>
<dbReference type="CDD" id="cd11073">
    <property type="entry name" value="CYP76-like"/>
    <property type="match status" value="1"/>
</dbReference>
<dbReference type="FunFam" id="1.10.630.10:FF:000007">
    <property type="entry name" value="Cytochrome P450 76C4"/>
    <property type="match status" value="1"/>
</dbReference>
<dbReference type="Gene3D" id="1.10.630.10">
    <property type="entry name" value="Cytochrome P450"/>
    <property type="match status" value="1"/>
</dbReference>
<dbReference type="InterPro" id="IPR001128">
    <property type="entry name" value="Cyt_P450"/>
</dbReference>
<dbReference type="InterPro" id="IPR017972">
    <property type="entry name" value="Cyt_P450_CS"/>
</dbReference>
<dbReference type="InterPro" id="IPR002401">
    <property type="entry name" value="Cyt_P450_E_grp-I"/>
</dbReference>
<dbReference type="InterPro" id="IPR036396">
    <property type="entry name" value="Cyt_P450_sf"/>
</dbReference>
<dbReference type="PANTHER" id="PTHR47950:SF15">
    <property type="entry name" value="CYTOCHROME P450"/>
    <property type="match status" value="1"/>
</dbReference>
<dbReference type="PANTHER" id="PTHR47950">
    <property type="entry name" value="CYTOCHROME P450, FAMILY 76, SUBFAMILY C, POLYPEPTIDE 5-RELATED"/>
    <property type="match status" value="1"/>
</dbReference>
<dbReference type="Pfam" id="PF00067">
    <property type="entry name" value="p450"/>
    <property type="match status" value="1"/>
</dbReference>
<dbReference type="PRINTS" id="PR00463">
    <property type="entry name" value="EP450I"/>
</dbReference>
<dbReference type="PRINTS" id="PR00385">
    <property type="entry name" value="P450"/>
</dbReference>
<dbReference type="SUPFAM" id="SSF48264">
    <property type="entry name" value="Cytochrome P450"/>
    <property type="match status" value="1"/>
</dbReference>
<dbReference type="PROSITE" id="PS00086">
    <property type="entry name" value="CYTOCHROME_P450"/>
    <property type="match status" value="1"/>
</dbReference>
<keyword id="KW-0017">Alkaloid metabolism</keyword>
<keyword id="KW-0256">Endoplasmic reticulum</keyword>
<keyword id="KW-0349">Heme</keyword>
<keyword id="KW-0408">Iron</keyword>
<keyword id="KW-0472">Membrane</keyword>
<keyword id="KW-0479">Metal-binding</keyword>
<keyword id="KW-0503">Monooxygenase</keyword>
<keyword id="KW-0560">Oxidoreductase</keyword>
<keyword id="KW-0812">Transmembrane</keyword>
<keyword id="KW-1133">Transmembrane helix</keyword>
<evidence type="ECO:0000250" key="1">
    <source>
        <dbReference type="UniProtKB" id="P04798"/>
    </source>
</evidence>
<evidence type="ECO:0000255" key="2"/>
<evidence type="ECO:0000269" key="3">
    <source>
    </source>
</evidence>
<evidence type="ECO:0000303" key="4">
    <source>
    </source>
</evidence>
<evidence type="ECO:0000305" key="5"/>
<protein>
    <recommendedName>
        <fullName evidence="4">Iridoid oxidase</fullName>
        <shortName evidence="4">CrIO</shortName>
        <ecNumber evidence="3">1.14.14.161</ecNumber>
    </recommendedName>
    <alternativeName>
        <fullName evidence="4">Cytochrome P450 76A26</fullName>
        <shortName evidence="4">CrCYP76A26</shortName>
    </alternativeName>
</protein>
<reference key="1">
    <citation type="journal article" date="2014" name="Nat. Commun.">
        <title>The seco-iridoid pathway from Catharanthus roseus.</title>
        <authorList>
            <person name="Miettinen K."/>
            <person name="Dong L."/>
            <person name="Navrot N."/>
            <person name="Schneider T."/>
            <person name="Burlat V."/>
            <person name="Pollier J."/>
            <person name="Woittiez L."/>
            <person name="van der Krol S."/>
            <person name="Lugan R."/>
            <person name="Ilc T."/>
            <person name="Verpoorte R."/>
            <person name="Oksman-Caldentey K.M."/>
            <person name="Martinoia E."/>
            <person name="Bouwmeester H."/>
            <person name="Goossens A."/>
            <person name="Memelink J."/>
            <person name="Werck-Reichhart D."/>
        </authorList>
    </citation>
    <scope>NUCLEOTIDE SEQUENCE [MRNA]</scope>
    <scope>FUNCTION</scope>
    <scope>CATALYTIC ACTIVITY</scope>
    <scope>TISSUE SPECIFICITY</scope>
    <scope>INDUCTION BY JASMONIC ACID</scope>
    <scope>PATHWAY</scope>
    <scope>SUBCELLULAR LOCATION</scope>
    <scope>BIOPHYSICOCHEMICAL PROPERTIES</scope>
    <source>
        <strain>cv. Little Bright Eyes</strain>
    </source>
</reference>